<comment type="function">
    <text evidence="2 4">Part of the ATP-binding cassette (ABC) transport system YfeABC involved in iron import (PubMed:9495751). Binds iron with high affinity and specificity and delivers it to the membrane permease for translocation into the cytoplasm (PubMed:9495751). Also binds Mn(2+) and Zn(2+) (PubMed:31478906).</text>
</comment>
<comment type="subunit">
    <text evidence="3">Monomer.</text>
</comment>
<comment type="subcellular location">
    <subcellularLocation>
        <location evidence="2">Periplasm</location>
    </subcellularLocation>
</comment>
<comment type="domain">
    <text evidence="3">There is a second metal binding site (site 2) involving Glu-162 and His-163 which can bind Mn(2+) or Zn(2+). It is unclear what its physiological function is but may participate in protein-protein interactions with other metal- binding proteins.</text>
</comment>
<comment type="similarity">
    <text evidence="5">Belongs to the bacterial solute-binding protein 9 family.</text>
</comment>
<comment type="sequence caution" evidence="5">
    <conflict type="erroneous initiation">
        <sequence resource="EMBL-CDS" id="AAM85464"/>
    </conflict>
</comment>
<comment type="sequence caution" evidence="5">
    <conflict type="erroneous initiation">
        <sequence resource="EMBL-CDS" id="AAS62433"/>
    </conflict>
</comment>
<comment type="sequence caution" evidence="5">
    <conflict type="erroneous initiation">
        <sequence resource="EMBL-CDS" id="CAL21067"/>
    </conflict>
</comment>
<reference key="1">
    <citation type="journal article" date="1998" name="J. Bacteriol.">
        <title>An ABC transporter system of Yersinia pestis allows utilization of chelated iron by Escherichia coli SAB11.</title>
        <authorList>
            <person name="Bearden S.W."/>
            <person name="Staggs T.M."/>
            <person name="Perry R.D."/>
        </authorList>
    </citation>
    <scope>NUCLEOTIDE SEQUENCE [GENOMIC DNA]</scope>
    <scope>FUNCTION</scope>
    <source>
        <strain>KIM6</strain>
    </source>
</reference>
<reference key="2">
    <citation type="journal article" date="2001" name="Nature">
        <title>Genome sequence of Yersinia pestis, the causative agent of plague.</title>
        <authorList>
            <person name="Parkhill J."/>
            <person name="Wren B.W."/>
            <person name="Thomson N.R."/>
            <person name="Titball R.W."/>
            <person name="Holden M.T.G."/>
            <person name="Prentice M.B."/>
            <person name="Sebaihia M."/>
            <person name="James K.D."/>
            <person name="Churcher C.M."/>
            <person name="Mungall K.L."/>
            <person name="Baker S."/>
            <person name="Basham D."/>
            <person name="Bentley S.D."/>
            <person name="Brooks K."/>
            <person name="Cerdeno-Tarraga A.-M."/>
            <person name="Chillingworth T."/>
            <person name="Cronin A."/>
            <person name="Davies R.M."/>
            <person name="Davis P."/>
            <person name="Dougan G."/>
            <person name="Feltwell T."/>
            <person name="Hamlin N."/>
            <person name="Holroyd S."/>
            <person name="Jagels K."/>
            <person name="Karlyshev A.V."/>
            <person name="Leather S."/>
            <person name="Moule S."/>
            <person name="Oyston P.C.F."/>
            <person name="Quail M.A."/>
            <person name="Rutherford K.M."/>
            <person name="Simmonds M."/>
            <person name="Skelton J."/>
            <person name="Stevens K."/>
            <person name="Whitehead S."/>
            <person name="Barrell B.G."/>
        </authorList>
    </citation>
    <scope>NUCLEOTIDE SEQUENCE [LARGE SCALE GENOMIC DNA]</scope>
    <source>
        <strain>CO-92 / Biovar Orientalis</strain>
    </source>
</reference>
<reference key="3">
    <citation type="journal article" date="2002" name="J. Bacteriol.">
        <title>Genome sequence of Yersinia pestis KIM.</title>
        <authorList>
            <person name="Deng W."/>
            <person name="Burland V."/>
            <person name="Plunkett G. III"/>
            <person name="Boutin A."/>
            <person name="Mayhew G.F."/>
            <person name="Liss P."/>
            <person name="Perna N.T."/>
            <person name="Rose D.J."/>
            <person name="Mau B."/>
            <person name="Zhou S."/>
            <person name="Schwartz D.C."/>
            <person name="Fetherston J.D."/>
            <person name="Lindler L.E."/>
            <person name="Brubaker R.R."/>
            <person name="Plano G.V."/>
            <person name="Straley S.C."/>
            <person name="McDonough K.A."/>
            <person name="Nilles M.L."/>
            <person name="Matson J.S."/>
            <person name="Blattner F.R."/>
            <person name="Perry R.D."/>
        </authorList>
    </citation>
    <scope>NUCLEOTIDE SEQUENCE [LARGE SCALE GENOMIC DNA]</scope>
    <source>
        <strain>KIM10+ / Biovar Mediaevalis</strain>
    </source>
</reference>
<reference key="4">
    <citation type="journal article" date="2004" name="DNA Res.">
        <title>Complete genome sequence of Yersinia pestis strain 91001, an isolate avirulent to humans.</title>
        <authorList>
            <person name="Song Y."/>
            <person name="Tong Z."/>
            <person name="Wang J."/>
            <person name="Wang L."/>
            <person name="Guo Z."/>
            <person name="Han Y."/>
            <person name="Zhang J."/>
            <person name="Pei D."/>
            <person name="Zhou D."/>
            <person name="Qin H."/>
            <person name="Pang X."/>
            <person name="Han Y."/>
            <person name="Zhai J."/>
            <person name="Li M."/>
            <person name="Cui B."/>
            <person name="Qi Z."/>
            <person name="Jin L."/>
            <person name="Dai R."/>
            <person name="Chen F."/>
            <person name="Li S."/>
            <person name="Ye C."/>
            <person name="Du Z."/>
            <person name="Lin W."/>
            <person name="Wang J."/>
            <person name="Yu J."/>
            <person name="Yang H."/>
            <person name="Wang J."/>
            <person name="Huang P."/>
            <person name="Yang R."/>
        </authorList>
    </citation>
    <scope>NUCLEOTIDE SEQUENCE [LARGE SCALE GENOMIC DNA]</scope>
    <source>
        <strain>91001 / Biovar Mediaevalis</strain>
    </source>
</reference>
<reference evidence="8 9" key="5">
    <citation type="journal article" date="2019" name="Acta Crystallogr. D Struct. Biol.">
        <title>Structures of the substrate-binding protein YfeA in apo and zinc-reconstituted holo forms.</title>
        <authorList>
            <person name="Radka C.D."/>
            <person name="Labiuk S.L."/>
            <person name="DeLucas L.J."/>
            <person name="Aller S.G."/>
        </authorList>
    </citation>
    <scope>X-RAY CRYSTALLOGRAPHY (1.76 ANGSTROMS) IN COMPLEX WITH ZINC</scope>
    <scope>FUNCTION</scope>
    <scope>SUBCELLULAR LOCATION</scope>
</reference>
<reference evidence="10 11 12" key="6">
    <citation type="journal article" date="2021" name="Acta Crystallogr. F Struct. Biol. Commun.">
        <title>Site 2 of the Yersinia pestis substrate-binding protein YfeA is a dynamic surface metal-binding site.</title>
        <authorList>
            <person name="Radka C.D."/>
            <person name="Aller S.G."/>
        </authorList>
    </citation>
    <scope>X-RAY CRYSTALLOGRAPHY (1.85 ANGSTROMS) IN WITH IRON; MANGANESE AND ZINC</scope>
    <scope>SUBUNIT</scope>
    <scope>DOMAIN</scope>
</reference>
<sequence length="311" mass="34389">MIERLNSPFLRAAALFTIVAFSSLISTAALAENNPSDTAKKFKVVTTFTIIQDIAQNIAGDVAVVESITKPGAEIHDYQPTPRDIVKAQSADLILWNGMNLERWFEKFFESIKDVPSAVVTAGITPLPIREGPYSGIANPHAWMSPSNALIYIENIRKALVEHDPAHAETYNRNAQAYAEKIKALDAPLRERLSRIPAEQRWLVTSEGAFSYLAKDYGFKEVYLWPINAEQQGIPQQVRHVIDIIRENKIPVVFSESTISDKPAKQVSKETGAQYGGVLYVDSLSGEKGPVPTYISLINMTVDTIAKGFGQ</sequence>
<accession>Q56952</accession>
<accession>Q0WE85</accession>
<gene>
    <name type="primary">yfeA</name>
    <name type="ordered locus">YPO2439</name>
    <name type="ordered locus">y1897</name>
    <name type="ordered locus">YP_2227</name>
</gene>
<keyword id="KW-0002">3D-structure</keyword>
<keyword id="KW-0406">Ion transport</keyword>
<keyword id="KW-0408">Iron</keyword>
<keyword id="KW-0410">Iron transport</keyword>
<keyword id="KW-0479">Metal-binding</keyword>
<keyword id="KW-0574">Periplasm</keyword>
<keyword id="KW-1185">Reference proteome</keyword>
<keyword id="KW-0732">Signal</keyword>
<keyword id="KW-0813">Transport</keyword>
<proteinExistence type="evidence at protein level"/>
<evidence type="ECO:0000255" key="1"/>
<evidence type="ECO:0000269" key="2">
    <source>
    </source>
</evidence>
<evidence type="ECO:0000269" key="3">
    <source>
    </source>
</evidence>
<evidence type="ECO:0000269" key="4">
    <source>
    </source>
</evidence>
<evidence type="ECO:0000305" key="5"/>
<evidence type="ECO:0000305" key="6">
    <source>
    </source>
</evidence>
<evidence type="ECO:0000312" key="7">
    <source>
        <dbReference type="PDB" id="7ME2"/>
    </source>
</evidence>
<evidence type="ECO:0007744" key="8">
    <source>
        <dbReference type="PDB" id="6Q1C"/>
    </source>
</evidence>
<evidence type="ECO:0007744" key="9">
    <source>
        <dbReference type="PDB" id="6Q1D"/>
    </source>
</evidence>
<evidence type="ECO:0007744" key="10">
    <source>
        <dbReference type="PDB" id="7ME1"/>
    </source>
</evidence>
<evidence type="ECO:0007744" key="11">
    <source>
        <dbReference type="PDB" id="7ME2"/>
    </source>
</evidence>
<evidence type="ECO:0007744" key="12">
    <source>
        <dbReference type="PDB" id="7ME3"/>
    </source>
</evidence>
<evidence type="ECO:0007829" key="13">
    <source>
        <dbReference type="PDB" id="5UXS"/>
    </source>
</evidence>
<evidence type="ECO:0007829" key="14">
    <source>
        <dbReference type="PDB" id="7ME3"/>
    </source>
</evidence>
<organism>
    <name type="scientific">Yersinia pestis</name>
    <dbReference type="NCBI Taxonomy" id="632"/>
    <lineage>
        <taxon>Bacteria</taxon>
        <taxon>Pseudomonadati</taxon>
        <taxon>Pseudomonadota</taxon>
        <taxon>Gammaproteobacteria</taxon>
        <taxon>Enterobacterales</taxon>
        <taxon>Yersiniaceae</taxon>
        <taxon>Yersinia</taxon>
    </lineage>
</organism>
<name>YFEA_YERPE</name>
<protein>
    <recommendedName>
        <fullName>Iron-binding protein YfeA</fullName>
    </recommendedName>
    <alternativeName>
        <fullName>Periplasmic chelated iron-binding protein YfeA</fullName>
    </alternativeName>
</protein>
<feature type="signal peptide" evidence="1">
    <location>
        <begin position="1"/>
        <end position="31"/>
    </location>
</feature>
<feature type="chain" id="PRO_0000031873" description="Iron-binding protein YfeA">
    <location>
        <begin position="32"/>
        <end position="311"/>
    </location>
</feature>
<feature type="binding site" evidence="3 6 7 9 10 12">
    <location>
        <position position="76"/>
    </location>
    <ligand>
        <name>Fe(2+)</name>
        <dbReference type="ChEBI" id="CHEBI:29033"/>
    </ligand>
</feature>
<feature type="binding site" evidence="3 6 7 9 10 12">
    <location>
        <position position="141"/>
    </location>
    <ligand>
        <name>Fe(2+)</name>
        <dbReference type="ChEBI" id="CHEBI:29033"/>
    </ligand>
</feature>
<feature type="binding site" evidence="3 6 7 9 10 12">
    <location>
        <position position="207"/>
    </location>
    <ligand>
        <name>Fe(2+)</name>
        <dbReference type="ChEBI" id="CHEBI:29033"/>
    </ligand>
</feature>
<feature type="binding site" evidence="3 6 7 9 10 12">
    <location>
        <position position="282"/>
    </location>
    <ligand>
        <name>Fe(2+)</name>
        <dbReference type="ChEBI" id="CHEBI:29033"/>
    </ligand>
</feature>
<feature type="strand" evidence="13">
    <location>
        <begin position="42"/>
        <end position="48"/>
    </location>
</feature>
<feature type="helix" evidence="13">
    <location>
        <begin position="49"/>
        <end position="59"/>
    </location>
</feature>
<feature type="strand" evidence="13">
    <location>
        <begin position="62"/>
        <end position="69"/>
    </location>
</feature>
<feature type="helix" evidence="13">
    <location>
        <begin position="82"/>
        <end position="89"/>
    </location>
</feature>
<feature type="strand" evidence="13">
    <location>
        <begin position="92"/>
        <end position="96"/>
    </location>
</feature>
<feature type="helix" evidence="13">
    <location>
        <begin position="105"/>
        <end position="109"/>
    </location>
</feature>
<feature type="strand" evidence="13">
    <location>
        <begin position="117"/>
        <end position="119"/>
    </location>
</feature>
<feature type="turn" evidence="13">
    <location>
        <begin position="120"/>
        <end position="123"/>
    </location>
</feature>
<feature type="turn" evidence="13">
    <location>
        <begin position="133"/>
        <end position="136"/>
    </location>
</feature>
<feature type="strand" evidence="14">
    <location>
        <begin position="137"/>
        <end position="139"/>
    </location>
</feature>
<feature type="helix" evidence="13">
    <location>
        <begin position="142"/>
        <end position="144"/>
    </location>
</feature>
<feature type="helix" evidence="13">
    <location>
        <begin position="146"/>
        <end position="163"/>
    </location>
</feature>
<feature type="helix" evidence="13">
    <location>
        <begin position="165"/>
        <end position="167"/>
    </location>
</feature>
<feature type="helix" evidence="13">
    <location>
        <begin position="168"/>
        <end position="194"/>
    </location>
</feature>
<feature type="helix" evidence="13">
    <location>
        <begin position="198"/>
        <end position="200"/>
    </location>
</feature>
<feature type="strand" evidence="13">
    <location>
        <begin position="202"/>
        <end position="208"/>
    </location>
</feature>
<feature type="helix" evidence="13">
    <location>
        <begin position="211"/>
        <end position="217"/>
    </location>
</feature>
<feature type="strand" evidence="13">
    <location>
        <begin position="220"/>
        <end position="230"/>
    </location>
</feature>
<feature type="helix" evidence="13">
    <location>
        <begin position="237"/>
        <end position="248"/>
    </location>
</feature>
<feature type="strand" evidence="13">
    <location>
        <begin position="252"/>
        <end position="256"/>
    </location>
</feature>
<feature type="helix" evidence="13">
    <location>
        <begin position="262"/>
        <end position="270"/>
    </location>
</feature>
<feature type="strand" evidence="13">
    <location>
        <begin position="274"/>
        <end position="279"/>
    </location>
</feature>
<feature type="helix" evidence="13">
    <location>
        <begin position="294"/>
        <end position="308"/>
    </location>
</feature>
<dbReference type="EMBL" id="U50597">
    <property type="protein sequence ID" value="AAC46147.1"/>
    <property type="molecule type" value="Genomic_DNA"/>
</dbReference>
<dbReference type="EMBL" id="AL590842">
    <property type="protein sequence ID" value="CAL21067.1"/>
    <property type="status" value="ALT_INIT"/>
    <property type="molecule type" value="Genomic_DNA"/>
</dbReference>
<dbReference type="EMBL" id="AE009952">
    <property type="protein sequence ID" value="AAM85464.1"/>
    <property type="status" value="ALT_INIT"/>
    <property type="molecule type" value="Genomic_DNA"/>
</dbReference>
<dbReference type="EMBL" id="AE017042">
    <property type="protein sequence ID" value="AAS62433.1"/>
    <property type="status" value="ALT_INIT"/>
    <property type="molecule type" value="Genomic_DNA"/>
</dbReference>
<dbReference type="PIR" id="AH0297">
    <property type="entry name" value="AH0297"/>
</dbReference>
<dbReference type="RefSeq" id="YP_002347403.1">
    <property type="nucleotide sequence ID" value="NC_003143.1"/>
</dbReference>
<dbReference type="PDB" id="5UXS">
    <property type="method" value="X-ray"/>
    <property type="resolution" value="1.42 A"/>
    <property type="chains" value="A=1-311"/>
</dbReference>
<dbReference type="PDB" id="5UXU">
    <property type="method" value="X-ray"/>
    <property type="resolution" value="1.84 A"/>
    <property type="chains" value="A=1-311"/>
</dbReference>
<dbReference type="PDB" id="5UY0">
    <property type="method" value="X-ray"/>
    <property type="resolution" value="1.71 A"/>
    <property type="chains" value="A=1-311"/>
</dbReference>
<dbReference type="PDB" id="5UY4">
    <property type="method" value="X-ray"/>
    <property type="resolution" value="1.92 A"/>
    <property type="chains" value="A=1-311"/>
</dbReference>
<dbReference type="PDB" id="5UY5">
    <property type="method" value="X-ray"/>
    <property type="resolution" value="2.14 A"/>
    <property type="chains" value="A=1-311"/>
</dbReference>
<dbReference type="PDB" id="5UYA">
    <property type="method" value="X-ray"/>
    <property type="resolution" value="1.72 A"/>
    <property type="chains" value="A=1-311"/>
</dbReference>
<dbReference type="PDB" id="5UYB">
    <property type="method" value="X-ray"/>
    <property type="resolution" value="1.95 A"/>
    <property type="chains" value="A=1-311"/>
</dbReference>
<dbReference type="PDB" id="5UYC">
    <property type="method" value="X-ray"/>
    <property type="resolution" value="1.96 A"/>
    <property type="chains" value="A=1-311"/>
</dbReference>
<dbReference type="PDB" id="5UYD">
    <property type="method" value="X-ray"/>
    <property type="resolution" value="1.93 A"/>
    <property type="chains" value="A=1-311"/>
</dbReference>
<dbReference type="PDB" id="5UYE">
    <property type="method" value="X-ray"/>
    <property type="resolution" value="2.09 A"/>
    <property type="chains" value="A=1-311"/>
</dbReference>
<dbReference type="PDB" id="5UYF">
    <property type="method" value="X-ray"/>
    <property type="resolution" value="2.06 A"/>
    <property type="chains" value="A=1-311"/>
</dbReference>
<dbReference type="PDB" id="5UYG">
    <property type="method" value="X-ray"/>
    <property type="resolution" value="1.86 A"/>
    <property type="chains" value="A=1-311"/>
</dbReference>
<dbReference type="PDB" id="5UYH">
    <property type="method" value="X-ray"/>
    <property type="resolution" value="1.99 A"/>
    <property type="chains" value="A=1-311"/>
</dbReference>
<dbReference type="PDB" id="5UYV">
    <property type="method" value="X-ray"/>
    <property type="resolution" value="1.69 A"/>
    <property type="chains" value="A=1-311"/>
</dbReference>
<dbReference type="PDB" id="5UYW">
    <property type="method" value="X-ray"/>
    <property type="resolution" value="1.95 A"/>
    <property type="chains" value="A=1-311"/>
</dbReference>
<dbReference type="PDB" id="6Q1C">
    <property type="method" value="X-ray"/>
    <property type="resolution" value="1.76 A"/>
    <property type="chains" value="A=1-311"/>
</dbReference>
<dbReference type="PDB" id="6Q1D">
    <property type="method" value="X-ray"/>
    <property type="resolution" value="1.79 A"/>
    <property type="chains" value="A=1-311"/>
</dbReference>
<dbReference type="PDB" id="7ME1">
    <property type="method" value="X-ray"/>
    <property type="resolution" value="2.05 A"/>
    <property type="chains" value="A/B=1-311"/>
</dbReference>
<dbReference type="PDB" id="7ME2">
    <property type="method" value="X-ray"/>
    <property type="resolution" value="1.85 A"/>
    <property type="chains" value="A/B=1-311"/>
</dbReference>
<dbReference type="PDB" id="7ME3">
    <property type="method" value="X-ray"/>
    <property type="resolution" value="2.25 A"/>
    <property type="chains" value="A/B=1-311"/>
</dbReference>
<dbReference type="PDBsum" id="5UXS"/>
<dbReference type="PDBsum" id="5UXU"/>
<dbReference type="PDBsum" id="5UY0"/>
<dbReference type="PDBsum" id="5UY4"/>
<dbReference type="PDBsum" id="5UY5"/>
<dbReference type="PDBsum" id="5UYA"/>
<dbReference type="PDBsum" id="5UYB"/>
<dbReference type="PDBsum" id="5UYC"/>
<dbReference type="PDBsum" id="5UYD"/>
<dbReference type="PDBsum" id="5UYE"/>
<dbReference type="PDBsum" id="5UYF"/>
<dbReference type="PDBsum" id="5UYG"/>
<dbReference type="PDBsum" id="5UYH"/>
<dbReference type="PDBsum" id="5UYV"/>
<dbReference type="PDBsum" id="5UYW"/>
<dbReference type="PDBsum" id="6Q1C"/>
<dbReference type="PDBsum" id="6Q1D"/>
<dbReference type="PDBsum" id="7ME1"/>
<dbReference type="PDBsum" id="7ME2"/>
<dbReference type="PDBsum" id="7ME3"/>
<dbReference type="SMR" id="Q56952"/>
<dbReference type="STRING" id="214092.YPO2439"/>
<dbReference type="TCDB" id="3.A.1.15.4">
    <property type="family name" value="the atp-binding cassette (abc) superfamily"/>
</dbReference>
<dbReference type="PaxDb" id="214092-YPO2439"/>
<dbReference type="DNASU" id="1146844"/>
<dbReference type="EnsemblBacteria" id="AAS62433">
    <property type="protein sequence ID" value="AAS62433"/>
    <property type="gene ID" value="YP_2227"/>
</dbReference>
<dbReference type="KEGG" id="ype:YPO2439"/>
<dbReference type="KEGG" id="ypk:y1897"/>
<dbReference type="KEGG" id="ypm:YP_2227"/>
<dbReference type="PATRIC" id="fig|214092.21.peg.2850"/>
<dbReference type="eggNOG" id="COG0803">
    <property type="taxonomic scope" value="Bacteria"/>
</dbReference>
<dbReference type="HOGENOM" id="CLU_016838_1_1_6"/>
<dbReference type="Proteomes" id="UP000000815">
    <property type="component" value="Chromosome"/>
</dbReference>
<dbReference type="Proteomes" id="UP000001019">
    <property type="component" value="Chromosome"/>
</dbReference>
<dbReference type="Proteomes" id="UP000002490">
    <property type="component" value="Chromosome"/>
</dbReference>
<dbReference type="GO" id="GO:0042597">
    <property type="term" value="C:periplasmic space"/>
    <property type="evidence" value="ECO:0007669"/>
    <property type="project" value="UniProtKB-SubCell"/>
</dbReference>
<dbReference type="GO" id="GO:0046872">
    <property type="term" value="F:metal ion binding"/>
    <property type="evidence" value="ECO:0007669"/>
    <property type="project" value="UniProtKB-KW"/>
</dbReference>
<dbReference type="GO" id="GO:0007155">
    <property type="term" value="P:cell adhesion"/>
    <property type="evidence" value="ECO:0007669"/>
    <property type="project" value="InterPro"/>
</dbReference>
<dbReference type="GO" id="GO:0071281">
    <property type="term" value="P:cellular response to iron ion"/>
    <property type="evidence" value="ECO:0000269"/>
    <property type="project" value="CollecTF"/>
</dbReference>
<dbReference type="GO" id="GO:0006826">
    <property type="term" value="P:iron ion transport"/>
    <property type="evidence" value="ECO:0007669"/>
    <property type="project" value="UniProtKB-KW"/>
</dbReference>
<dbReference type="CDD" id="cd01137">
    <property type="entry name" value="PsaA"/>
    <property type="match status" value="1"/>
</dbReference>
<dbReference type="FunFam" id="3.40.50.1980:FF:000097">
    <property type="entry name" value="Periplasmic chelated iron-binding protein YfeA"/>
    <property type="match status" value="1"/>
</dbReference>
<dbReference type="Gene3D" id="3.40.50.1980">
    <property type="entry name" value="Nitrogenase molybdenum iron protein domain"/>
    <property type="match status" value="2"/>
</dbReference>
<dbReference type="InterPro" id="IPR006129">
    <property type="entry name" value="AdhesinB"/>
</dbReference>
<dbReference type="InterPro" id="IPR050492">
    <property type="entry name" value="Bact_metal-bind_prot9"/>
</dbReference>
<dbReference type="InterPro" id="IPR006128">
    <property type="entry name" value="Lipoprotein_PsaA-like"/>
</dbReference>
<dbReference type="InterPro" id="IPR006127">
    <property type="entry name" value="ZnuA-like"/>
</dbReference>
<dbReference type="PANTHER" id="PTHR42953">
    <property type="entry name" value="HIGH-AFFINITY ZINC UPTAKE SYSTEM PROTEIN ZNUA-RELATED"/>
    <property type="match status" value="1"/>
</dbReference>
<dbReference type="PANTHER" id="PTHR42953:SF1">
    <property type="entry name" value="METAL-BINDING PROTEIN HI_0362-RELATED"/>
    <property type="match status" value="1"/>
</dbReference>
<dbReference type="Pfam" id="PF01297">
    <property type="entry name" value="ZnuA"/>
    <property type="match status" value="1"/>
</dbReference>
<dbReference type="PRINTS" id="PR00691">
    <property type="entry name" value="ADHESINB"/>
</dbReference>
<dbReference type="PRINTS" id="PR00690">
    <property type="entry name" value="ADHESNFAMILY"/>
</dbReference>
<dbReference type="SUPFAM" id="SSF53807">
    <property type="entry name" value="Helical backbone' metal receptor"/>
    <property type="match status" value="1"/>
</dbReference>